<keyword id="KW-0687">Ribonucleoprotein</keyword>
<keyword id="KW-0689">Ribosomal protein</keyword>
<keyword id="KW-0694">RNA-binding</keyword>
<keyword id="KW-0699">rRNA-binding</keyword>
<organism>
    <name type="scientific">Campylobacter jejuni (strain RM1221)</name>
    <dbReference type="NCBI Taxonomy" id="195099"/>
    <lineage>
        <taxon>Bacteria</taxon>
        <taxon>Pseudomonadati</taxon>
        <taxon>Campylobacterota</taxon>
        <taxon>Epsilonproteobacteria</taxon>
        <taxon>Campylobacterales</taxon>
        <taxon>Campylobacteraceae</taxon>
        <taxon>Campylobacter</taxon>
    </lineage>
</organism>
<sequence>MKVLLIKDVKALGKAGEIKEVKDGYGQNFLIAKGFAKAATNEVLRKYESDKKKEAENLRFEIANLEKLKEELSKITLEISKPVGANGSLFGGVTKDEIAHALKEQSHIEIDKKSLECDTLKSLGIHEVSVKLGHAIHAKFNINIKAE</sequence>
<proteinExistence type="inferred from homology"/>
<protein>
    <recommendedName>
        <fullName evidence="1">Large ribosomal subunit protein bL9</fullName>
    </recommendedName>
    <alternativeName>
        <fullName evidence="2">50S ribosomal protein L9</fullName>
    </alternativeName>
</protein>
<comment type="function">
    <text evidence="1">Binds to the 23S rRNA.</text>
</comment>
<comment type="similarity">
    <text evidence="1">Belongs to the bacterial ribosomal protein bL9 family.</text>
</comment>
<reference key="1">
    <citation type="journal article" date="2005" name="PLoS Biol.">
        <title>Major structural differences and novel potential virulence mechanisms from the genomes of multiple Campylobacter species.</title>
        <authorList>
            <person name="Fouts D.E."/>
            <person name="Mongodin E.F."/>
            <person name="Mandrell R.E."/>
            <person name="Miller W.G."/>
            <person name="Rasko D.A."/>
            <person name="Ravel J."/>
            <person name="Brinkac L.M."/>
            <person name="DeBoy R.T."/>
            <person name="Parker C.T."/>
            <person name="Daugherty S.C."/>
            <person name="Dodson R.J."/>
            <person name="Durkin A.S."/>
            <person name="Madupu R."/>
            <person name="Sullivan S.A."/>
            <person name="Shetty J.U."/>
            <person name="Ayodeji M.A."/>
            <person name="Shvartsbeyn A."/>
            <person name="Schatz M.C."/>
            <person name="Badger J.H."/>
            <person name="Fraser C.M."/>
            <person name="Nelson K.E."/>
        </authorList>
    </citation>
    <scope>NUCLEOTIDE SEQUENCE [LARGE SCALE GENOMIC DNA]</scope>
    <source>
        <strain>RM1221</strain>
    </source>
</reference>
<dbReference type="EMBL" id="CP000025">
    <property type="protein sequence ID" value="AAW34557.1"/>
    <property type="molecule type" value="Genomic_DNA"/>
</dbReference>
<dbReference type="RefSeq" id="WP_002781628.1">
    <property type="nucleotide sequence ID" value="NC_003912.7"/>
</dbReference>
<dbReference type="SMR" id="Q5HVB0"/>
<dbReference type="KEGG" id="cjr:CJE0766"/>
<dbReference type="HOGENOM" id="CLU_078938_3_0_7"/>
<dbReference type="GO" id="GO:1990904">
    <property type="term" value="C:ribonucleoprotein complex"/>
    <property type="evidence" value="ECO:0007669"/>
    <property type="project" value="UniProtKB-KW"/>
</dbReference>
<dbReference type="GO" id="GO:0005840">
    <property type="term" value="C:ribosome"/>
    <property type="evidence" value="ECO:0007669"/>
    <property type="project" value="UniProtKB-KW"/>
</dbReference>
<dbReference type="GO" id="GO:0019843">
    <property type="term" value="F:rRNA binding"/>
    <property type="evidence" value="ECO:0007669"/>
    <property type="project" value="UniProtKB-UniRule"/>
</dbReference>
<dbReference type="GO" id="GO:0003735">
    <property type="term" value="F:structural constituent of ribosome"/>
    <property type="evidence" value="ECO:0007669"/>
    <property type="project" value="InterPro"/>
</dbReference>
<dbReference type="GO" id="GO:0006412">
    <property type="term" value="P:translation"/>
    <property type="evidence" value="ECO:0007669"/>
    <property type="project" value="UniProtKB-UniRule"/>
</dbReference>
<dbReference type="FunFam" id="3.10.430.100:FF:000003">
    <property type="entry name" value="50S ribosomal protein L9"/>
    <property type="match status" value="1"/>
</dbReference>
<dbReference type="FunFam" id="3.40.5.10:FF:000002">
    <property type="entry name" value="50S ribosomal protein L9"/>
    <property type="match status" value="1"/>
</dbReference>
<dbReference type="Gene3D" id="3.10.430.100">
    <property type="entry name" value="Ribosomal protein L9, C-terminal domain"/>
    <property type="match status" value="1"/>
</dbReference>
<dbReference type="Gene3D" id="3.40.5.10">
    <property type="entry name" value="Ribosomal protein L9, N-terminal domain"/>
    <property type="match status" value="1"/>
</dbReference>
<dbReference type="HAMAP" id="MF_00503">
    <property type="entry name" value="Ribosomal_bL9"/>
    <property type="match status" value="1"/>
</dbReference>
<dbReference type="InterPro" id="IPR000244">
    <property type="entry name" value="Ribosomal_bL9"/>
</dbReference>
<dbReference type="InterPro" id="IPR009027">
    <property type="entry name" value="Ribosomal_bL9/RNase_H1_N"/>
</dbReference>
<dbReference type="InterPro" id="IPR020594">
    <property type="entry name" value="Ribosomal_bL9_bac/chp"/>
</dbReference>
<dbReference type="InterPro" id="IPR020069">
    <property type="entry name" value="Ribosomal_bL9_C"/>
</dbReference>
<dbReference type="InterPro" id="IPR036791">
    <property type="entry name" value="Ribosomal_bL9_C_sf"/>
</dbReference>
<dbReference type="InterPro" id="IPR020070">
    <property type="entry name" value="Ribosomal_bL9_N"/>
</dbReference>
<dbReference type="InterPro" id="IPR036935">
    <property type="entry name" value="Ribosomal_bL9_N_sf"/>
</dbReference>
<dbReference type="NCBIfam" id="TIGR00158">
    <property type="entry name" value="L9"/>
    <property type="match status" value="1"/>
</dbReference>
<dbReference type="PANTHER" id="PTHR21368">
    <property type="entry name" value="50S RIBOSOMAL PROTEIN L9"/>
    <property type="match status" value="1"/>
</dbReference>
<dbReference type="Pfam" id="PF03948">
    <property type="entry name" value="Ribosomal_L9_C"/>
    <property type="match status" value="1"/>
</dbReference>
<dbReference type="Pfam" id="PF01281">
    <property type="entry name" value="Ribosomal_L9_N"/>
    <property type="match status" value="1"/>
</dbReference>
<dbReference type="SUPFAM" id="SSF55658">
    <property type="entry name" value="L9 N-domain-like"/>
    <property type="match status" value="1"/>
</dbReference>
<dbReference type="SUPFAM" id="SSF55653">
    <property type="entry name" value="Ribosomal protein L9 C-domain"/>
    <property type="match status" value="1"/>
</dbReference>
<dbReference type="PROSITE" id="PS00651">
    <property type="entry name" value="RIBOSOMAL_L9"/>
    <property type="match status" value="1"/>
</dbReference>
<accession>Q5HVB0</accession>
<gene>
    <name evidence="1" type="primary">rplI</name>
    <name type="ordered locus">CJE0766</name>
</gene>
<feature type="chain" id="PRO_0000236502" description="Large ribosomal subunit protein bL9">
    <location>
        <begin position="1"/>
        <end position="147"/>
    </location>
</feature>
<evidence type="ECO:0000255" key="1">
    <source>
        <dbReference type="HAMAP-Rule" id="MF_00503"/>
    </source>
</evidence>
<evidence type="ECO:0000305" key="2"/>
<name>RL9_CAMJR</name>